<reference key="1">
    <citation type="journal article" date="2013" name="Plant Physiol.">
        <title>A Nostoc punctiforme Sugar Transporter Necessary to Establish a Cyanobacterium-Plant Symbiosis.</title>
        <authorList>
            <person name="Ekman M."/>
            <person name="Picossi S."/>
            <person name="Campbell E.L."/>
            <person name="Meeks J.C."/>
            <person name="Flores E."/>
        </authorList>
    </citation>
    <scope>NUCLEOTIDE SEQUENCE [LARGE SCALE GENOMIC DNA]</scope>
    <source>
        <strain>ATCC 29133 / PCC 73102</strain>
    </source>
</reference>
<dbReference type="EMBL" id="CP001037">
    <property type="protein sequence ID" value="ACC82748.1"/>
    <property type="molecule type" value="Genomic_DNA"/>
</dbReference>
<dbReference type="RefSeq" id="WP_012410710.1">
    <property type="nucleotide sequence ID" value="NC_010628.1"/>
</dbReference>
<dbReference type="SMR" id="B2ITP0"/>
<dbReference type="STRING" id="63737.Npun_R4375"/>
<dbReference type="EnsemblBacteria" id="ACC82748">
    <property type="protein sequence ID" value="ACC82748"/>
    <property type="gene ID" value="Npun_R4375"/>
</dbReference>
<dbReference type="KEGG" id="npu:Npun_R4375"/>
<dbReference type="eggNOG" id="COG0256">
    <property type="taxonomic scope" value="Bacteria"/>
</dbReference>
<dbReference type="HOGENOM" id="CLU_098841_0_1_3"/>
<dbReference type="OrthoDB" id="9810939at2"/>
<dbReference type="PhylomeDB" id="B2ITP0"/>
<dbReference type="Proteomes" id="UP000001191">
    <property type="component" value="Chromosome"/>
</dbReference>
<dbReference type="GO" id="GO:0022625">
    <property type="term" value="C:cytosolic large ribosomal subunit"/>
    <property type="evidence" value="ECO:0007669"/>
    <property type="project" value="TreeGrafter"/>
</dbReference>
<dbReference type="GO" id="GO:0008097">
    <property type="term" value="F:5S rRNA binding"/>
    <property type="evidence" value="ECO:0007669"/>
    <property type="project" value="TreeGrafter"/>
</dbReference>
<dbReference type="GO" id="GO:0003735">
    <property type="term" value="F:structural constituent of ribosome"/>
    <property type="evidence" value="ECO:0007669"/>
    <property type="project" value="InterPro"/>
</dbReference>
<dbReference type="GO" id="GO:0006412">
    <property type="term" value="P:translation"/>
    <property type="evidence" value="ECO:0007669"/>
    <property type="project" value="UniProtKB-UniRule"/>
</dbReference>
<dbReference type="CDD" id="cd00432">
    <property type="entry name" value="Ribosomal_L18_L5e"/>
    <property type="match status" value="1"/>
</dbReference>
<dbReference type="FunFam" id="3.30.420.100:FF:000001">
    <property type="entry name" value="50S ribosomal protein L18"/>
    <property type="match status" value="1"/>
</dbReference>
<dbReference type="Gene3D" id="3.30.420.100">
    <property type="match status" value="1"/>
</dbReference>
<dbReference type="HAMAP" id="MF_01337_B">
    <property type="entry name" value="Ribosomal_uL18_B"/>
    <property type="match status" value="1"/>
</dbReference>
<dbReference type="InterPro" id="IPR004389">
    <property type="entry name" value="Ribosomal_uL18_bac-type"/>
</dbReference>
<dbReference type="InterPro" id="IPR005484">
    <property type="entry name" value="Ribosomal_uL18_bac/euk"/>
</dbReference>
<dbReference type="NCBIfam" id="TIGR00060">
    <property type="entry name" value="L18_bact"/>
    <property type="match status" value="1"/>
</dbReference>
<dbReference type="PANTHER" id="PTHR12899">
    <property type="entry name" value="39S RIBOSOMAL PROTEIN L18, MITOCHONDRIAL"/>
    <property type="match status" value="1"/>
</dbReference>
<dbReference type="PANTHER" id="PTHR12899:SF3">
    <property type="entry name" value="LARGE RIBOSOMAL SUBUNIT PROTEIN UL18M"/>
    <property type="match status" value="1"/>
</dbReference>
<dbReference type="Pfam" id="PF00861">
    <property type="entry name" value="Ribosomal_L18p"/>
    <property type="match status" value="1"/>
</dbReference>
<dbReference type="SUPFAM" id="SSF53137">
    <property type="entry name" value="Translational machinery components"/>
    <property type="match status" value="1"/>
</dbReference>
<accession>B2ITP0</accession>
<organism>
    <name type="scientific">Nostoc punctiforme (strain ATCC 29133 / PCC 73102)</name>
    <dbReference type="NCBI Taxonomy" id="63737"/>
    <lineage>
        <taxon>Bacteria</taxon>
        <taxon>Bacillati</taxon>
        <taxon>Cyanobacteriota</taxon>
        <taxon>Cyanophyceae</taxon>
        <taxon>Nostocales</taxon>
        <taxon>Nostocaceae</taxon>
        <taxon>Nostoc</taxon>
    </lineage>
</organism>
<sequence length="120" mass="13288">MKLTRRESKNRRHRRVRGKVVGSPERPRLAVFRSNEHIYAQVIDDSQHQTIVAASTLEPELKSSLASGANRDASVQVGKLIAVRSLEKGITKVVFDRGGNLYHGRVKALADAAREAGLDF</sequence>
<comment type="function">
    <text evidence="1">This is one of the proteins that bind and probably mediate the attachment of the 5S RNA into the large ribosomal subunit, where it forms part of the central protuberance.</text>
</comment>
<comment type="subunit">
    <text evidence="1">Part of the 50S ribosomal subunit; part of the 5S rRNA/L5/L18/L25 subcomplex. Contacts the 5S and 23S rRNAs.</text>
</comment>
<comment type="similarity">
    <text evidence="1">Belongs to the universal ribosomal protein uL18 family.</text>
</comment>
<proteinExistence type="inferred from homology"/>
<feature type="chain" id="PRO_1000142693" description="Large ribosomal subunit protein uL18">
    <location>
        <begin position="1"/>
        <end position="120"/>
    </location>
</feature>
<feature type="region of interest" description="Disordered" evidence="2">
    <location>
        <begin position="1"/>
        <end position="22"/>
    </location>
</feature>
<feature type="compositionally biased region" description="Basic residues" evidence="2">
    <location>
        <begin position="8"/>
        <end position="18"/>
    </location>
</feature>
<name>RL18_NOSP7</name>
<protein>
    <recommendedName>
        <fullName evidence="1">Large ribosomal subunit protein uL18</fullName>
    </recommendedName>
    <alternativeName>
        <fullName evidence="3">50S ribosomal protein L18</fullName>
    </alternativeName>
</protein>
<evidence type="ECO:0000255" key="1">
    <source>
        <dbReference type="HAMAP-Rule" id="MF_01337"/>
    </source>
</evidence>
<evidence type="ECO:0000256" key="2">
    <source>
        <dbReference type="SAM" id="MobiDB-lite"/>
    </source>
</evidence>
<evidence type="ECO:0000305" key="3"/>
<keyword id="KW-1185">Reference proteome</keyword>
<keyword id="KW-0687">Ribonucleoprotein</keyword>
<keyword id="KW-0689">Ribosomal protein</keyword>
<keyword id="KW-0694">RNA-binding</keyword>
<keyword id="KW-0699">rRNA-binding</keyword>
<gene>
    <name evidence="1" type="primary">rplR</name>
    <name evidence="1" type="synonym">rpl18</name>
    <name type="ordered locus">Npun_R4375</name>
</gene>